<proteinExistence type="inferred from homology"/>
<name>RL15_BURM9</name>
<accession>A2S7J5</accession>
<dbReference type="EMBL" id="CP000546">
    <property type="protein sequence ID" value="ABN02277.1"/>
    <property type="molecule type" value="Genomic_DNA"/>
</dbReference>
<dbReference type="RefSeq" id="WP_004197941.1">
    <property type="nucleotide sequence ID" value="NC_008836.1"/>
</dbReference>
<dbReference type="SMR" id="A2S7J5"/>
<dbReference type="GeneID" id="92980300"/>
<dbReference type="KEGG" id="bml:BMA10229_A1943"/>
<dbReference type="HOGENOM" id="CLU_055188_4_2_4"/>
<dbReference type="Proteomes" id="UP000002283">
    <property type="component" value="Chromosome I"/>
</dbReference>
<dbReference type="GO" id="GO:0022625">
    <property type="term" value="C:cytosolic large ribosomal subunit"/>
    <property type="evidence" value="ECO:0007669"/>
    <property type="project" value="TreeGrafter"/>
</dbReference>
<dbReference type="GO" id="GO:0019843">
    <property type="term" value="F:rRNA binding"/>
    <property type="evidence" value="ECO:0007669"/>
    <property type="project" value="UniProtKB-UniRule"/>
</dbReference>
<dbReference type="GO" id="GO:0003735">
    <property type="term" value="F:structural constituent of ribosome"/>
    <property type="evidence" value="ECO:0007669"/>
    <property type="project" value="InterPro"/>
</dbReference>
<dbReference type="GO" id="GO:0006412">
    <property type="term" value="P:translation"/>
    <property type="evidence" value="ECO:0007669"/>
    <property type="project" value="UniProtKB-UniRule"/>
</dbReference>
<dbReference type="Gene3D" id="3.100.10.10">
    <property type="match status" value="1"/>
</dbReference>
<dbReference type="HAMAP" id="MF_01341">
    <property type="entry name" value="Ribosomal_uL15"/>
    <property type="match status" value="1"/>
</dbReference>
<dbReference type="InterPro" id="IPR030878">
    <property type="entry name" value="Ribosomal_uL15"/>
</dbReference>
<dbReference type="InterPro" id="IPR021131">
    <property type="entry name" value="Ribosomal_uL15/eL18"/>
</dbReference>
<dbReference type="InterPro" id="IPR036227">
    <property type="entry name" value="Ribosomal_uL15/eL18_sf"/>
</dbReference>
<dbReference type="InterPro" id="IPR005749">
    <property type="entry name" value="Ribosomal_uL15_bac-type"/>
</dbReference>
<dbReference type="InterPro" id="IPR001196">
    <property type="entry name" value="Ribosomal_uL15_CS"/>
</dbReference>
<dbReference type="NCBIfam" id="TIGR01071">
    <property type="entry name" value="rplO_bact"/>
    <property type="match status" value="1"/>
</dbReference>
<dbReference type="PANTHER" id="PTHR12934">
    <property type="entry name" value="50S RIBOSOMAL PROTEIN L15"/>
    <property type="match status" value="1"/>
</dbReference>
<dbReference type="PANTHER" id="PTHR12934:SF11">
    <property type="entry name" value="LARGE RIBOSOMAL SUBUNIT PROTEIN UL15M"/>
    <property type="match status" value="1"/>
</dbReference>
<dbReference type="Pfam" id="PF00828">
    <property type="entry name" value="Ribosomal_L27A"/>
    <property type="match status" value="1"/>
</dbReference>
<dbReference type="SUPFAM" id="SSF52080">
    <property type="entry name" value="Ribosomal proteins L15p and L18e"/>
    <property type="match status" value="1"/>
</dbReference>
<dbReference type="PROSITE" id="PS00475">
    <property type="entry name" value="RIBOSOMAL_L15"/>
    <property type="match status" value="1"/>
</dbReference>
<gene>
    <name evidence="1" type="primary">rplO</name>
    <name type="ordered locus">BMA10229_A1943</name>
</gene>
<organism>
    <name type="scientific">Burkholderia mallei (strain NCTC 10229)</name>
    <dbReference type="NCBI Taxonomy" id="412022"/>
    <lineage>
        <taxon>Bacteria</taxon>
        <taxon>Pseudomonadati</taxon>
        <taxon>Pseudomonadota</taxon>
        <taxon>Betaproteobacteria</taxon>
        <taxon>Burkholderiales</taxon>
        <taxon>Burkholderiaceae</taxon>
        <taxon>Burkholderia</taxon>
        <taxon>pseudomallei group</taxon>
    </lineage>
</organism>
<evidence type="ECO:0000255" key="1">
    <source>
        <dbReference type="HAMAP-Rule" id="MF_01341"/>
    </source>
</evidence>
<evidence type="ECO:0000256" key="2">
    <source>
        <dbReference type="SAM" id="MobiDB-lite"/>
    </source>
</evidence>
<evidence type="ECO:0000305" key="3"/>
<keyword id="KW-0687">Ribonucleoprotein</keyword>
<keyword id="KW-0689">Ribosomal protein</keyword>
<keyword id="KW-0694">RNA-binding</keyword>
<keyword id="KW-0699">rRNA-binding</keyword>
<protein>
    <recommendedName>
        <fullName evidence="1">Large ribosomal subunit protein uL15</fullName>
    </recommendedName>
    <alternativeName>
        <fullName evidence="3">50S ribosomal protein L15</fullName>
    </alternativeName>
</protein>
<sequence length="144" mass="15136">MELNNLKPAEGAKHAKRRVGRGIGSGLGKTAGRGHKGQKSRSGGFHKVGFEGGQMPLQRRLPKRGFTSLTKEFVGEVRLGDLEKLPVDEIDLLALKQAGLVGELIKSAKIIATGELKRKIVVKGLGATKGARAAIEAAGGSFAE</sequence>
<feature type="chain" id="PRO_1000054438" description="Large ribosomal subunit protein uL15">
    <location>
        <begin position="1"/>
        <end position="144"/>
    </location>
</feature>
<feature type="region of interest" description="Disordered" evidence="2">
    <location>
        <begin position="1"/>
        <end position="56"/>
    </location>
</feature>
<feature type="compositionally biased region" description="Gly residues" evidence="2">
    <location>
        <begin position="21"/>
        <end position="31"/>
    </location>
</feature>
<comment type="function">
    <text evidence="1">Binds to the 23S rRNA.</text>
</comment>
<comment type="subunit">
    <text evidence="1">Part of the 50S ribosomal subunit.</text>
</comment>
<comment type="similarity">
    <text evidence="1">Belongs to the universal ribosomal protein uL15 family.</text>
</comment>
<reference key="1">
    <citation type="journal article" date="2010" name="Genome Biol. Evol.">
        <title>Continuing evolution of Burkholderia mallei through genome reduction and large-scale rearrangements.</title>
        <authorList>
            <person name="Losada L."/>
            <person name="Ronning C.M."/>
            <person name="DeShazer D."/>
            <person name="Woods D."/>
            <person name="Fedorova N."/>
            <person name="Kim H.S."/>
            <person name="Shabalina S.A."/>
            <person name="Pearson T.R."/>
            <person name="Brinkac L."/>
            <person name="Tan P."/>
            <person name="Nandi T."/>
            <person name="Crabtree J."/>
            <person name="Badger J."/>
            <person name="Beckstrom-Sternberg S."/>
            <person name="Saqib M."/>
            <person name="Schutzer S.E."/>
            <person name="Keim P."/>
            <person name="Nierman W.C."/>
        </authorList>
    </citation>
    <scope>NUCLEOTIDE SEQUENCE [LARGE SCALE GENOMIC DNA]</scope>
    <source>
        <strain>NCTC 10229</strain>
    </source>
</reference>